<keyword id="KW-1204">Blood coagulation cascade activating toxin</keyword>
<keyword id="KW-1216">Complement system impairing toxin</keyword>
<keyword id="KW-0903">Direct protein sequencing</keyword>
<keyword id="KW-1015">Disulfide bond</keyword>
<keyword id="KW-1205">Fibrinolytic toxin</keyword>
<keyword id="KW-0325">Glycoprotein</keyword>
<keyword id="KW-1199">Hemostasis impairing toxin</keyword>
<keyword id="KW-0378">Hydrolase</keyword>
<keyword id="KW-1202">Platelet aggregation activating toxin</keyword>
<keyword id="KW-0645">Protease</keyword>
<keyword id="KW-0964">Secreted</keyword>
<keyword id="KW-0720">Serine protease</keyword>
<keyword id="KW-0800">Toxin</keyword>
<accession>P0DL27</accession>
<feature type="chain" id="PRO_0000422277" description="Thrombin-like enzyme BpirSP41">
    <location>
        <begin position="1"/>
        <end position="50" status="greater than"/>
    </location>
</feature>
<feature type="domain" description="Peptidase S1" evidence="2">
    <location>
        <begin position="1"/>
        <end position="50" status="greater than"/>
    </location>
</feature>
<feature type="active site" description="Charge relay system" evidence="2 3 4">
    <location>
        <position position="40"/>
    </location>
</feature>
<feature type="disulfide bond" evidence="2">
    <location>
        <begin position="7"/>
        <end status="unknown"/>
    </location>
</feature>
<feature type="disulfide bond" evidence="2">
    <location>
        <begin position="25"/>
        <end position="41"/>
    </location>
</feature>
<feature type="non-terminal residue">
    <location>
        <position position="50"/>
    </location>
</feature>
<proteinExistence type="evidence at protein level"/>
<protein>
    <recommendedName>
        <fullName>Thrombin-like enzyme BpirSP41</fullName>
        <shortName>SVTLE</shortName>
        <ecNumber>3.4.21.-</ecNumber>
    </recommendedName>
    <alternativeName>
        <fullName>Fibrinogen-clotting enzyme</fullName>
    </alternativeName>
    <alternativeName>
        <fullName>Snake venom serine protease</fullName>
        <shortName>SVSP</shortName>
    </alternativeName>
</protein>
<comment type="function">
    <text evidence="5 6">Snake venom serine protease that interferes with the hemostatic system of the prey. It almost completely degrades both Aalpha (FGA) and Bbeta (FGB) chains of fibrinogen. It presents a higher ability to degrade fibrin clots than BpirSP27. It hydrolyzes chromogenic substrates S-2238 (used for testing thrombin activity), S-2222 (factor Xa), S-2266 (glandular kallikrein and factor XIa), and S-2302 (plasma kallikrein, factor XIa and XIIa). It shows a decrease in the clotting time of human plasma in the presence of increasing doses of the enzyme. Its minimum coagulant dose (MCD) is 20 ug. It promotes platelet aggregation with a maximum of aggregation of 20%, regardless of the concentration increase or the presence of calcium. It also shows 40% inhibition of the hemolytic activity promoted by the complement pathways and possess only a minor role in the induction of edema and pain in rat.</text>
</comment>
<comment type="activity regulation">
    <text evidence="5">Inhibited by serine protease inhibitors PMSF, benzamidine, leupeptin and aprotinin, as well as by copper ions (Cu2+). Not inhibited by metalloprotease inhibitors EDTA, EGTA and 1,10-phenanthroline, as well as by barium (Ba2+) and calcium ion (Ca2+).</text>
</comment>
<comment type="biophysicochemical properties">
    <phDependence>
        <text evidence="5">Optimum pH is 6.0-10.5.</text>
    </phDependence>
    <temperatureDependence>
        <text evidence="5">Optimum temperature is 4-60 degrees Celsius.</text>
    </temperatureDependence>
</comment>
<comment type="subunit">
    <text evidence="1">Monomer.</text>
</comment>
<comment type="subcellular location">
    <subcellularLocation>
        <location>Secreted</location>
    </subcellularLocation>
</comment>
<comment type="tissue specificity">
    <text>Expressed by the venom gland.</text>
</comment>
<comment type="PTM">
    <text evidence="5">N-glycosylated.</text>
</comment>
<comment type="mass spectrometry"/>
<comment type="miscellaneous">
    <text evidence="7">Acidic enzyme (pI is 3.7).</text>
</comment>
<comment type="miscellaneous">
    <text evidence="7">Negative results: does not degrade the gamma chain of fibrinogen (FGG). It has no activity on S-2251 (used for testing plasmin activity) (PubMed:22819993).</text>
</comment>
<comment type="similarity">
    <text evidence="2">Belongs to the peptidase S1 family. Snake venom subfamily.</text>
</comment>
<name>VSP41_BOTPI</name>
<organism>
    <name type="scientific">Bothrops pirajai</name>
    <name type="common">Piraja's lancehead</name>
    <dbReference type="NCBI Taxonomy" id="113192"/>
    <lineage>
        <taxon>Eukaryota</taxon>
        <taxon>Metazoa</taxon>
        <taxon>Chordata</taxon>
        <taxon>Craniata</taxon>
        <taxon>Vertebrata</taxon>
        <taxon>Euteleostomi</taxon>
        <taxon>Lepidosauria</taxon>
        <taxon>Squamata</taxon>
        <taxon>Bifurcata</taxon>
        <taxon>Unidentata</taxon>
        <taxon>Episquamata</taxon>
        <taxon>Toxicofera</taxon>
        <taxon>Serpentes</taxon>
        <taxon>Colubroidea</taxon>
        <taxon>Viperidae</taxon>
        <taxon>Crotalinae</taxon>
        <taxon>Bothrops</taxon>
    </lineage>
</organism>
<evidence type="ECO:0000250" key="1"/>
<evidence type="ECO:0000255" key="2">
    <source>
        <dbReference type="PROSITE-ProRule" id="PRU00274"/>
    </source>
</evidence>
<evidence type="ECO:0000255" key="3">
    <source>
        <dbReference type="PROSITE-ProRule" id="PRU10078"/>
    </source>
</evidence>
<evidence type="ECO:0000255" key="4">
    <source>
        <dbReference type="PROSITE-ProRule" id="PRU10079"/>
    </source>
</evidence>
<evidence type="ECO:0000269" key="5">
    <source>
    </source>
</evidence>
<evidence type="ECO:0000269" key="6">
    <source>
    </source>
</evidence>
<evidence type="ECO:0000305" key="7">
    <source>
    </source>
</evidence>
<sequence>VVGGDECDINEHPFLAFLYSHGYFCGLTLINQEWVLTAAHCDRRFMRIYL</sequence>
<dbReference type="EC" id="3.4.21.-"/>
<dbReference type="SMR" id="P0DL27"/>
<dbReference type="GO" id="GO:0005576">
    <property type="term" value="C:extracellular region"/>
    <property type="evidence" value="ECO:0007669"/>
    <property type="project" value="UniProtKB-SubCell"/>
</dbReference>
<dbReference type="GO" id="GO:0004252">
    <property type="term" value="F:serine-type endopeptidase activity"/>
    <property type="evidence" value="ECO:0007669"/>
    <property type="project" value="InterPro"/>
</dbReference>
<dbReference type="GO" id="GO:0090729">
    <property type="term" value="F:toxin activity"/>
    <property type="evidence" value="ECO:0007669"/>
    <property type="project" value="UniProtKB-KW"/>
</dbReference>
<dbReference type="GO" id="GO:0006508">
    <property type="term" value="P:proteolysis"/>
    <property type="evidence" value="ECO:0007669"/>
    <property type="project" value="UniProtKB-KW"/>
</dbReference>
<dbReference type="Gene3D" id="2.40.10.10">
    <property type="entry name" value="Trypsin-like serine proteases"/>
    <property type="match status" value="1"/>
</dbReference>
<dbReference type="InterPro" id="IPR009003">
    <property type="entry name" value="Peptidase_S1_PA"/>
</dbReference>
<dbReference type="InterPro" id="IPR043504">
    <property type="entry name" value="Peptidase_S1_PA_chymotrypsin"/>
</dbReference>
<dbReference type="InterPro" id="IPR001254">
    <property type="entry name" value="Trypsin_dom"/>
</dbReference>
<dbReference type="InterPro" id="IPR018114">
    <property type="entry name" value="TRYPSIN_HIS"/>
</dbReference>
<dbReference type="Pfam" id="PF00089">
    <property type="entry name" value="Trypsin"/>
    <property type="match status" value="1"/>
</dbReference>
<dbReference type="SUPFAM" id="SSF50494">
    <property type="entry name" value="Trypsin-like serine proteases"/>
    <property type="match status" value="1"/>
</dbReference>
<dbReference type="PROSITE" id="PS00134">
    <property type="entry name" value="TRYPSIN_HIS"/>
    <property type="match status" value="1"/>
</dbReference>
<reference key="1">
    <citation type="journal article" date="2012" name="Biochimie">
        <title>Biochemical characterization and comparative analysis of two distinct serine proteases from Bothrops pirajai snake venom.</title>
        <authorList>
            <person name="Menaldo D.L."/>
            <person name="Bernardes C.P."/>
            <person name="Santos-Filho N.A."/>
            <person name="Moura Lde A."/>
            <person name="Fuly A.L."/>
            <person name="Arantes E.C."/>
            <person name="Sampaio S.V."/>
        </authorList>
    </citation>
    <scope>PROTEIN SEQUENCE</scope>
    <scope>FUNCTION</scope>
    <scope>ACTIVITY REGULATION</scope>
    <scope>BIOPHYSICOCHEMICAL PROPERTIES</scope>
    <scope>MASS SPECTROMETRY</scope>
    <source>
        <tissue>Venom</tissue>
    </source>
</reference>
<reference key="2">
    <citation type="journal article" date="2013" name="Int. Immunopharmacol.">
        <title>Effects of two serine proteases from Bothrops pirajai snake venom on the complement system and the inflammatory response.</title>
        <authorList>
            <person name="Menaldo D.L."/>
            <person name="Bernardes C.P."/>
            <person name="Pereira J.C."/>
            <person name="Silveira D.S."/>
            <person name="Mamede C.C."/>
            <person name="Stanziola L."/>
            <person name="de Oliveira F."/>
            <person name="Pereira-Crott L.S."/>
            <person name="Faccioli L.H."/>
            <person name="Sampaio S.V."/>
        </authorList>
    </citation>
    <scope>FUNCTION</scope>
    <scope>BIOASSAY</scope>
</reference>